<name>RL18_BACC3</name>
<protein>
    <recommendedName>
        <fullName evidence="1">Large ribosomal subunit protein uL18</fullName>
    </recommendedName>
    <alternativeName>
        <fullName evidence="2">50S ribosomal protein L18</fullName>
    </alternativeName>
</protein>
<comment type="function">
    <text evidence="1">This is one of the proteins that bind and probably mediate the attachment of the 5S RNA into the large ribosomal subunit, where it forms part of the central protuberance.</text>
</comment>
<comment type="subunit">
    <text evidence="1">Part of the 50S ribosomal subunit; part of the 5S rRNA/L5/L18/L25 subcomplex. Contacts the 5S and 23S rRNAs.</text>
</comment>
<comment type="similarity">
    <text evidence="1">Belongs to the universal ribosomal protein uL18 family.</text>
</comment>
<proteinExistence type="inferred from homology"/>
<feature type="chain" id="PRO_1000166205" description="Large ribosomal subunit protein uL18">
    <location>
        <begin position="1"/>
        <end position="120"/>
    </location>
</feature>
<keyword id="KW-0687">Ribonucleoprotein</keyword>
<keyword id="KW-0689">Ribosomal protein</keyword>
<keyword id="KW-0694">RNA-binding</keyword>
<keyword id="KW-0699">rRNA-binding</keyword>
<gene>
    <name evidence="1" type="primary">rplR</name>
    <name type="ordered locus">BCA_0155</name>
</gene>
<reference key="1">
    <citation type="submission" date="2009-02" db="EMBL/GenBank/DDBJ databases">
        <title>Genome sequence of Bacillus cereus 03BB102.</title>
        <authorList>
            <person name="Dodson R.J."/>
            <person name="Jackson P."/>
            <person name="Munk A.C."/>
            <person name="Brettin T."/>
            <person name="Bruce D."/>
            <person name="Detter C."/>
            <person name="Tapia R."/>
            <person name="Han C."/>
            <person name="Sutton G."/>
            <person name="Sims D."/>
        </authorList>
    </citation>
    <scope>NUCLEOTIDE SEQUENCE [LARGE SCALE GENOMIC DNA]</scope>
    <source>
        <strain>03BB102</strain>
    </source>
</reference>
<organism>
    <name type="scientific">Bacillus cereus (strain 03BB102)</name>
    <dbReference type="NCBI Taxonomy" id="572264"/>
    <lineage>
        <taxon>Bacteria</taxon>
        <taxon>Bacillati</taxon>
        <taxon>Bacillota</taxon>
        <taxon>Bacilli</taxon>
        <taxon>Bacillales</taxon>
        <taxon>Bacillaceae</taxon>
        <taxon>Bacillus</taxon>
        <taxon>Bacillus cereus group</taxon>
    </lineage>
</organism>
<sequence length="120" mass="13106">MITKADKNATRKKRHARVRAKLTGTAERPRLNVFRSNQHIYAQVIDDVNGVTLVSASTLDKDLALNGTSNIEAATKVGESVAKRAVEKGVKEVVFDRGGYLYHGRVKALAEAAREAGLQF</sequence>
<evidence type="ECO:0000255" key="1">
    <source>
        <dbReference type="HAMAP-Rule" id="MF_01337"/>
    </source>
</evidence>
<evidence type="ECO:0000305" key="2"/>
<accession>C1ET55</accession>
<dbReference type="EMBL" id="CP001407">
    <property type="protein sequence ID" value="ACO26050.1"/>
    <property type="molecule type" value="Genomic_DNA"/>
</dbReference>
<dbReference type="RefSeq" id="WP_000628816.1">
    <property type="nucleotide sequence ID" value="NZ_CP009318.1"/>
</dbReference>
<dbReference type="SMR" id="C1ET55"/>
<dbReference type="GeneID" id="93010927"/>
<dbReference type="KEGG" id="bcx:BCA_0155"/>
<dbReference type="PATRIC" id="fig|572264.18.peg.190"/>
<dbReference type="Proteomes" id="UP000002210">
    <property type="component" value="Chromosome"/>
</dbReference>
<dbReference type="GO" id="GO:0022625">
    <property type="term" value="C:cytosolic large ribosomal subunit"/>
    <property type="evidence" value="ECO:0007669"/>
    <property type="project" value="TreeGrafter"/>
</dbReference>
<dbReference type="GO" id="GO:0008097">
    <property type="term" value="F:5S rRNA binding"/>
    <property type="evidence" value="ECO:0007669"/>
    <property type="project" value="TreeGrafter"/>
</dbReference>
<dbReference type="GO" id="GO:0003735">
    <property type="term" value="F:structural constituent of ribosome"/>
    <property type="evidence" value="ECO:0007669"/>
    <property type="project" value="InterPro"/>
</dbReference>
<dbReference type="GO" id="GO:0006412">
    <property type="term" value="P:translation"/>
    <property type="evidence" value="ECO:0007669"/>
    <property type="project" value="UniProtKB-UniRule"/>
</dbReference>
<dbReference type="CDD" id="cd00432">
    <property type="entry name" value="Ribosomal_L18_L5e"/>
    <property type="match status" value="1"/>
</dbReference>
<dbReference type="FunFam" id="3.30.420.100:FF:000001">
    <property type="entry name" value="50S ribosomal protein L18"/>
    <property type="match status" value="1"/>
</dbReference>
<dbReference type="Gene3D" id="3.30.420.100">
    <property type="match status" value="1"/>
</dbReference>
<dbReference type="HAMAP" id="MF_01337_B">
    <property type="entry name" value="Ribosomal_uL18_B"/>
    <property type="match status" value="1"/>
</dbReference>
<dbReference type="InterPro" id="IPR004389">
    <property type="entry name" value="Ribosomal_uL18_bac-type"/>
</dbReference>
<dbReference type="InterPro" id="IPR005484">
    <property type="entry name" value="Ribosomal_uL18_bac/euk"/>
</dbReference>
<dbReference type="NCBIfam" id="TIGR00060">
    <property type="entry name" value="L18_bact"/>
    <property type="match status" value="1"/>
</dbReference>
<dbReference type="PANTHER" id="PTHR12899">
    <property type="entry name" value="39S RIBOSOMAL PROTEIN L18, MITOCHONDRIAL"/>
    <property type="match status" value="1"/>
</dbReference>
<dbReference type="PANTHER" id="PTHR12899:SF3">
    <property type="entry name" value="LARGE RIBOSOMAL SUBUNIT PROTEIN UL18M"/>
    <property type="match status" value="1"/>
</dbReference>
<dbReference type="Pfam" id="PF00861">
    <property type="entry name" value="Ribosomal_L18p"/>
    <property type="match status" value="1"/>
</dbReference>
<dbReference type="SUPFAM" id="SSF53137">
    <property type="entry name" value="Translational machinery components"/>
    <property type="match status" value="1"/>
</dbReference>